<comment type="function">
    <text evidence="1">Catalyzes the hydrolytic cleavage of the carbon-nitrogen bond in imidazolone-5-propanoate to yield N-formimidoyl-L-glutamate. It is the third step in the universal histidine degradation pathway.</text>
</comment>
<comment type="catalytic activity">
    <reaction evidence="1">
        <text>4-imidazolone-5-propanoate + H2O = N-formimidoyl-L-glutamate</text>
        <dbReference type="Rhea" id="RHEA:23660"/>
        <dbReference type="ChEBI" id="CHEBI:15377"/>
        <dbReference type="ChEBI" id="CHEBI:58928"/>
        <dbReference type="ChEBI" id="CHEBI:77893"/>
        <dbReference type="EC" id="3.5.2.7"/>
    </reaction>
</comment>
<comment type="cofactor">
    <cofactor evidence="1">
        <name>Zn(2+)</name>
        <dbReference type="ChEBI" id="CHEBI:29105"/>
    </cofactor>
    <cofactor evidence="1">
        <name>Fe(3+)</name>
        <dbReference type="ChEBI" id="CHEBI:29034"/>
    </cofactor>
    <text evidence="1">Binds 1 zinc or iron ion per subunit.</text>
</comment>
<comment type="pathway">
    <text evidence="1">Amino-acid degradation; L-histidine degradation into L-glutamate; N-formimidoyl-L-glutamate from L-histidine: step 3/3.</text>
</comment>
<comment type="subcellular location">
    <subcellularLocation>
        <location evidence="1">Cytoplasm</location>
    </subcellularLocation>
</comment>
<comment type="similarity">
    <text evidence="1">Belongs to the metallo-dependent hydrolases superfamily. HutI family.</text>
</comment>
<evidence type="ECO:0000255" key="1">
    <source>
        <dbReference type="HAMAP-Rule" id="MF_00372"/>
    </source>
</evidence>
<keyword id="KW-0963">Cytoplasm</keyword>
<keyword id="KW-0369">Histidine metabolism</keyword>
<keyword id="KW-0378">Hydrolase</keyword>
<keyword id="KW-0408">Iron</keyword>
<keyword id="KW-0479">Metal-binding</keyword>
<keyword id="KW-0862">Zinc</keyword>
<name>HUTI_STRGG</name>
<accession>B1VUR8</accession>
<proteinExistence type="inferred from homology"/>
<gene>
    <name evidence="1" type="primary">hutI</name>
    <name type="ordered locus">SGR_4465</name>
</gene>
<sequence length="390" mass="40846">MTTTAVTHIASLVTNDPSLGNGTPLGLIQDAAVVIDGDRIVWTGESSKAPATDNVLDAAGRAVVPGFVDSHSHLVFAGDRTQEFNARMSGQPYRAGGIRTTVAATRAASDEELSANVARYLAEALRQGTTTFETKSGYGLTVEDEARALRIAGRHTDEVTYLGAHIVSPDYADDPAGYVDLVTGPMLEACAPHARWIDVFCEQGAFDGDQARAILTAGRAKGLHPRIHANQLTYGPGVQLAVELDAASADHCTHLTDADVDALGQGDTVATLLPGAEFSTRATWPDARRLLDAGATVALSTDCNPGSSFTSSVPFCIALAVRDMGMTPDEAIWSATAGGAAALRRTDIGRITPGARADLVLLDAPSHVHLAYRPGVPLVSAVWRSGQRVV</sequence>
<organism>
    <name type="scientific">Streptomyces griseus subsp. griseus (strain JCM 4626 / CBS 651.72 / NBRC 13350 / KCC S-0626 / ISP 5235)</name>
    <dbReference type="NCBI Taxonomy" id="455632"/>
    <lineage>
        <taxon>Bacteria</taxon>
        <taxon>Bacillati</taxon>
        <taxon>Actinomycetota</taxon>
        <taxon>Actinomycetes</taxon>
        <taxon>Kitasatosporales</taxon>
        <taxon>Streptomycetaceae</taxon>
        <taxon>Streptomyces</taxon>
    </lineage>
</organism>
<dbReference type="EC" id="3.5.2.7" evidence="1"/>
<dbReference type="EMBL" id="AP009493">
    <property type="protein sequence ID" value="BAG21294.1"/>
    <property type="molecule type" value="Genomic_DNA"/>
</dbReference>
<dbReference type="RefSeq" id="WP_012380626.1">
    <property type="nucleotide sequence ID" value="NC_010572.1"/>
</dbReference>
<dbReference type="SMR" id="B1VUR8"/>
<dbReference type="KEGG" id="sgr:SGR_4465"/>
<dbReference type="PATRIC" id="fig|455632.4.peg.4554"/>
<dbReference type="eggNOG" id="COG1228">
    <property type="taxonomic scope" value="Bacteria"/>
</dbReference>
<dbReference type="HOGENOM" id="CLU_041647_1_0_11"/>
<dbReference type="UniPathway" id="UPA00379">
    <property type="reaction ID" value="UER00551"/>
</dbReference>
<dbReference type="Proteomes" id="UP000001685">
    <property type="component" value="Chromosome"/>
</dbReference>
<dbReference type="GO" id="GO:0005737">
    <property type="term" value="C:cytoplasm"/>
    <property type="evidence" value="ECO:0007669"/>
    <property type="project" value="UniProtKB-SubCell"/>
</dbReference>
<dbReference type="GO" id="GO:0050480">
    <property type="term" value="F:imidazolonepropionase activity"/>
    <property type="evidence" value="ECO:0007669"/>
    <property type="project" value="UniProtKB-UniRule"/>
</dbReference>
<dbReference type="GO" id="GO:0005506">
    <property type="term" value="F:iron ion binding"/>
    <property type="evidence" value="ECO:0007669"/>
    <property type="project" value="UniProtKB-UniRule"/>
</dbReference>
<dbReference type="GO" id="GO:0008270">
    <property type="term" value="F:zinc ion binding"/>
    <property type="evidence" value="ECO:0007669"/>
    <property type="project" value="UniProtKB-UniRule"/>
</dbReference>
<dbReference type="GO" id="GO:0019556">
    <property type="term" value="P:L-histidine catabolic process to glutamate and formamide"/>
    <property type="evidence" value="ECO:0007669"/>
    <property type="project" value="UniProtKB-UniPathway"/>
</dbReference>
<dbReference type="GO" id="GO:0019557">
    <property type="term" value="P:L-histidine catabolic process to glutamate and formate"/>
    <property type="evidence" value="ECO:0007669"/>
    <property type="project" value="UniProtKB-UniPathway"/>
</dbReference>
<dbReference type="CDD" id="cd01296">
    <property type="entry name" value="Imidazolone-5PH"/>
    <property type="match status" value="1"/>
</dbReference>
<dbReference type="FunFam" id="3.20.20.140:FF:000007">
    <property type="entry name" value="Imidazolonepropionase"/>
    <property type="match status" value="1"/>
</dbReference>
<dbReference type="Gene3D" id="3.20.20.140">
    <property type="entry name" value="Metal-dependent hydrolases"/>
    <property type="match status" value="1"/>
</dbReference>
<dbReference type="Gene3D" id="2.30.40.10">
    <property type="entry name" value="Urease, subunit C, domain 1"/>
    <property type="match status" value="1"/>
</dbReference>
<dbReference type="HAMAP" id="MF_00372">
    <property type="entry name" value="HutI"/>
    <property type="match status" value="1"/>
</dbReference>
<dbReference type="InterPro" id="IPR006680">
    <property type="entry name" value="Amidohydro-rel"/>
</dbReference>
<dbReference type="InterPro" id="IPR005920">
    <property type="entry name" value="HutI"/>
</dbReference>
<dbReference type="InterPro" id="IPR011059">
    <property type="entry name" value="Metal-dep_hydrolase_composite"/>
</dbReference>
<dbReference type="InterPro" id="IPR032466">
    <property type="entry name" value="Metal_Hydrolase"/>
</dbReference>
<dbReference type="NCBIfam" id="TIGR01224">
    <property type="entry name" value="hutI"/>
    <property type="match status" value="1"/>
</dbReference>
<dbReference type="PANTHER" id="PTHR42752">
    <property type="entry name" value="IMIDAZOLONEPROPIONASE"/>
    <property type="match status" value="1"/>
</dbReference>
<dbReference type="PANTHER" id="PTHR42752:SF1">
    <property type="entry name" value="IMIDAZOLONEPROPIONASE-RELATED"/>
    <property type="match status" value="1"/>
</dbReference>
<dbReference type="Pfam" id="PF01979">
    <property type="entry name" value="Amidohydro_1"/>
    <property type="match status" value="1"/>
</dbReference>
<dbReference type="SUPFAM" id="SSF51338">
    <property type="entry name" value="Composite domain of metallo-dependent hydrolases"/>
    <property type="match status" value="2"/>
</dbReference>
<dbReference type="SUPFAM" id="SSF51556">
    <property type="entry name" value="Metallo-dependent hydrolases"/>
    <property type="match status" value="1"/>
</dbReference>
<protein>
    <recommendedName>
        <fullName evidence="1">Imidazolonepropionase</fullName>
        <ecNumber evidence="1">3.5.2.7</ecNumber>
    </recommendedName>
    <alternativeName>
        <fullName evidence="1">Imidazolone-5-propionate hydrolase</fullName>
    </alternativeName>
</protein>
<reference key="1">
    <citation type="journal article" date="2008" name="J. Bacteriol.">
        <title>Genome sequence of the streptomycin-producing microorganism Streptomyces griseus IFO 13350.</title>
        <authorList>
            <person name="Ohnishi Y."/>
            <person name="Ishikawa J."/>
            <person name="Hara H."/>
            <person name="Suzuki H."/>
            <person name="Ikenoya M."/>
            <person name="Ikeda H."/>
            <person name="Yamashita A."/>
            <person name="Hattori M."/>
            <person name="Horinouchi S."/>
        </authorList>
    </citation>
    <scope>NUCLEOTIDE SEQUENCE [LARGE SCALE GENOMIC DNA]</scope>
    <source>
        <strain>JCM 4626 / CBS 651.72 / NBRC 13350 / KCC S-0626 / ISP 5235</strain>
    </source>
</reference>
<feature type="chain" id="PRO_1000121558" description="Imidazolonepropionase">
    <location>
        <begin position="1"/>
        <end position="390"/>
    </location>
</feature>
<feature type="binding site" evidence="1">
    <location>
        <position position="71"/>
    </location>
    <ligand>
        <name>Fe(3+)</name>
        <dbReference type="ChEBI" id="CHEBI:29034"/>
    </ligand>
</feature>
<feature type="binding site" evidence="1">
    <location>
        <position position="71"/>
    </location>
    <ligand>
        <name>Zn(2+)</name>
        <dbReference type="ChEBI" id="CHEBI:29105"/>
    </ligand>
</feature>
<feature type="binding site" evidence="1">
    <location>
        <position position="73"/>
    </location>
    <ligand>
        <name>Fe(3+)</name>
        <dbReference type="ChEBI" id="CHEBI:29034"/>
    </ligand>
</feature>
<feature type="binding site" evidence="1">
    <location>
        <position position="73"/>
    </location>
    <ligand>
        <name>Zn(2+)</name>
        <dbReference type="ChEBI" id="CHEBI:29105"/>
    </ligand>
</feature>
<feature type="binding site" evidence="1">
    <location>
        <position position="80"/>
    </location>
    <ligand>
        <name>4-imidazolone-5-propanoate</name>
        <dbReference type="ChEBI" id="CHEBI:77893"/>
    </ligand>
</feature>
<feature type="binding site" evidence="1">
    <location>
        <position position="138"/>
    </location>
    <ligand>
        <name>4-imidazolone-5-propanoate</name>
        <dbReference type="ChEBI" id="CHEBI:77893"/>
    </ligand>
</feature>
<feature type="binding site" evidence="1">
    <location>
        <position position="138"/>
    </location>
    <ligand>
        <name>N-formimidoyl-L-glutamate</name>
        <dbReference type="ChEBI" id="CHEBI:58928"/>
    </ligand>
</feature>
<feature type="binding site" evidence="1">
    <location>
        <position position="165"/>
    </location>
    <ligand>
        <name>4-imidazolone-5-propanoate</name>
        <dbReference type="ChEBI" id="CHEBI:77893"/>
    </ligand>
</feature>
<feature type="binding site" evidence="1">
    <location>
        <position position="228"/>
    </location>
    <ligand>
        <name>Fe(3+)</name>
        <dbReference type="ChEBI" id="CHEBI:29034"/>
    </ligand>
</feature>
<feature type="binding site" evidence="1">
    <location>
        <position position="228"/>
    </location>
    <ligand>
        <name>Zn(2+)</name>
        <dbReference type="ChEBI" id="CHEBI:29105"/>
    </ligand>
</feature>
<feature type="binding site" evidence="1">
    <location>
        <position position="231"/>
    </location>
    <ligand>
        <name>4-imidazolone-5-propanoate</name>
        <dbReference type="ChEBI" id="CHEBI:77893"/>
    </ligand>
</feature>
<feature type="binding site" evidence="1">
    <location>
        <position position="302"/>
    </location>
    <ligand>
        <name>Fe(3+)</name>
        <dbReference type="ChEBI" id="CHEBI:29034"/>
    </ligand>
</feature>
<feature type="binding site" evidence="1">
    <location>
        <position position="302"/>
    </location>
    <ligand>
        <name>Zn(2+)</name>
        <dbReference type="ChEBI" id="CHEBI:29105"/>
    </ligand>
</feature>
<feature type="binding site" evidence="1">
    <location>
        <position position="304"/>
    </location>
    <ligand>
        <name>N-formimidoyl-L-glutamate</name>
        <dbReference type="ChEBI" id="CHEBI:58928"/>
    </ligand>
</feature>
<feature type="binding site" evidence="1">
    <location>
        <position position="306"/>
    </location>
    <ligand>
        <name>N-formimidoyl-L-glutamate</name>
        <dbReference type="ChEBI" id="CHEBI:58928"/>
    </ligand>
</feature>
<feature type="binding site" evidence="1">
    <location>
        <position position="307"/>
    </location>
    <ligand>
        <name>4-imidazolone-5-propanoate</name>
        <dbReference type="ChEBI" id="CHEBI:77893"/>
    </ligand>
</feature>